<accession>A0A248AFK6</accession>
<accession>M2PQ94</accession>
<feature type="chain" id="PRO_0000444316" description="Nonribosomal peptide synthetase NPS2">
    <location>
        <begin position="1"/>
        <end position="2464"/>
    </location>
</feature>
<feature type="domain" description="Carrier 1" evidence="3 7">
    <location>
        <begin position="814"/>
        <end position="888"/>
    </location>
</feature>
<feature type="domain" description="Carrier 2" evidence="3 7">
    <location>
        <begin position="1364"/>
        <end position="1437"/>
    </location>
</feature>
<feature type="domain" description="Carrier 3" evidence="3 7">
    <location>
        <begin position="1917"/>
        <end position="1993"/>
    </location>
</feature>
<feature type="region of interest" description="Adenylation 1" evidence="2 7">
    <location>
        <begin position="275"/>
        <end position="670"/>
    </location>
</feature>
<feature type="region of interest" description="Condensation 1" evidence="2 7">
    <location>
        <begin position="924"/>
        <end position="1325"/>
    </location>
</feature>
<feature type="region of interest" description="Condensation 2" evidence="2 7">
    <location>
        <begin position="1479"/>
        <end position="1887"/>
    </location>
</feature>
<feature type="region of interest" description="Condensation 3" evidence="2 7">
    <location>
        <begin position="2047"/>
        <end position="2340"/>
    </location>
</feature>
<feature type="modified residue" description="O-(pantetheine 4'-phosphoryl)serine" evidence="3">
    <location>
        <position position="848"/>
    </location>
</feature>
<feature type="modified residue" description="O-(pantetheine 4'-phosphoryl)serine" evidence="3">
    <location>
        <position position="1398"/>
    </location>
</feature>
<feature type="modified residue" description="O-(pantetheine 4'-phosphoryl)serine" evidence="3">
    <location>
        <position position="1954"/>
    </location>
</feature>
<comment type="function">
    <text evidence="4">Nonribosomal peptide synthetase; part of the siderophore basidioferrin biosynthetic pathway (PubMed:28842536). The biosynthesis of basidioferrin depends on the hydroxylation of ornithine to N(5)-hydroxyornithine, catalyzed by the monooxygenase SMO1 (PubMed:28842536). The second step, the acylation of N(5)-hydroxy-L-ornithine is catalyzed by a not yet identified N-acyltransferase (PubMed:22434909). Finally, assembly of basidioferrin is catalyzed by the nonribosomal peptide synthase (NRPS) NPS2 via amide bond formation between three L-AHO molecules to release the linear L-AHO trimer (PubMed:22434909). N-5-acetyl-N-5-hydroxy-L-ornithine (L-AHO) and N-5-cis-anhydromevalonyl-N-5-hydroxy-L-ornithine (L-AMHO) are accepted as the substrates by the NPS2 adenylation (A) domain, but only L-AHO is trimerized (PubMed:28842536).</text>
</comment>
<comment type="pathway">
    <text evidence="4">Siderophore biosynthesis.</text>
</comment>
<comment type="induction">
    <text evidence="4">Expression is induced under iron-depleted conditions (PubMed:28842536).</text>
</comment>
<comment type="domain">
    <text evidence="1 7">NRP synthetases are composed of discrete domains (adenylation (A), thiolation (T) or peptidyl carrier protein (PCP) and condensation (C) domains) which when grouped together are referred to as a single module (By similarity). Each module is responsible for the recognition (via the A domain) and incorporation of a single amino acid into the growing peptide product (By similarity). Thus, an NRP synthetase is generally composed of one or more modules and can terminate in a thioesterase domain (TE) that releases the newly synthesized peptide from the enzyme (By similarity). Occasionally, methyltransferase domains (responsible for amino acid methylation) are present within the NRP synthetase (By similarity). NPS2 has the following architecture: A-T-C-T-C-T-C (PubMed:28842536).</text>
</comment>
<comment type="similarity">
    <text evidence="6">Belongs to the NRP synthetase family.</text>
</comment>
<comment type="sequence caution" evidence="6">
    <conflict type="erroneous gene model prediction">
        <sequence resource="EMBL-CDS" id="EMD38714"/>
    </conflict>
</comment>
<organism>
    <name type="scientific">Ceriporiopsis subvermispora (strain B)</name>
    <name type="common">White-rot fungus</name>
    <name type="synonym">Gelatoporia subvermispora</name>
    <dbReference type="NCBI Taxonomy" id="914234"/>
    <lineage>
        <taxon>Eukaryota</taxon>
        <taxon>Fungi</taxon>
        <taxon>Dikarya</taxon>
        <taxon>Basidiomycota</taxon>
        <taxon>Agaricomycotina</taxon>
        <taxon>Agaricomycetes</taxon>
        <taxon>Polyporales</taxon>
        <taxon>Gelatoporiaceae</taxon>
        <taxon>Gelatoporia</taxon>
    </lineage>
</organism>
<proteinExistence type="evidence at protein level"/>
<evidence type="ECO:0000250" key="1">
    <source>
        <dbReference type="UniProtKB" id="A0A144KPJ6"/>
    </source>
</evidence>
<evidence type="ECO:0000255" key="2"/>
<evidence type="ECO:0000255" key="3">
    <source>
        <dbReference type="PROSITE-ProRule" id="PRU00258"/>
    </source>
</evidence>
<evidence type="ECO:0000269" key="4">
    <source>
    </source>
</evidence>
<evidence type="ECO:0000303" key="5">
    <source>
    </source>
</evidence>
<evidence type="ECO:0000305" key="6"/>
<evidence type="ECO:0000305" key="7">
    <source>
    </source>
</evidence>
<dbReference type="EC" id="6.3.2.-" evidence="4"/>
<dbReference type="EMBL" id="KY287598">
    <property type="protein sequence ID" value="AQX36215.1"/>
    <property type="molecule type" value="Genomic_DNA"/>
</dbReference>
<dbReference type="EMBL" id="KB445795">
    <property type="protein sequence ID" value="EMD38714.1"/>
    <property type="status" value="ALT_SEQ"/>
    <property type="molecule type" value="Genomic_DNA"/>
</dbReference>
<dbReference type="SMR" id="A0A248AFK6"/>
<dbReference type="STRING" id="914234.A0A248AFK6"/>
<dbReference type="HOGENOM" id="CLU_000092_0_0_1"/>
<dbReference type="OrthoDB" id="416786at2759"/>
<dbReference type="Proteomes" id="UP000016930">
    <property type="component" value="Unassembled WGS sequence"/>
</dbReference>
<dbReference type="GO" id="GO:0005737">
    <property type="term" value="C:cytoplasm"/>
    <property type="evidence" value="ECO:0007669"/>
    <property type="project" value="TreeGrafter"/>
</dbReference>
<dbReference type="GO" id="GO:0016874">
    <property type="term" value="F:ligase activity"/>
    <property type="evidence" value="ECO:0007669"/>
    <property type="project" value="UniProtKB-KW"/>
</dbReference>
<dbReference type="GO" id="GO:0031177">
    <property type="term" value="F:phosphopantetheine binding"/>
    <property type="evidence" value="ECO:0007669"/>
    <property type="project" value="InterPro"/>
</dbReference>
<dbReference type="GO" id="GO:0043041">
    <property type="term" value="P:amino acid activation for nonribosomal peptide biosynthetic process"/>
    <property type="evidence" value="ECO:0007669"/>
    <property type="project" value="TreeGrafter"/>
</dbReference>
<dbReference type="GO" id="GO:0044550">
    <property type="term" value="P:secondary metabolite biosynthetic process"/>
    <property type="evidence" value="ECO:0007669"/>
    <property type="project" value="TreeGrafter"/>
</dbReference>
<dbReference type="FunFam" id="3.40.50.980:FF:000001">
    <property type="entry name" value="Non-ribosomal peptide synthetase"/>
    <property type="match status" value="1"/>
</dbReference>
<dbReference type="FunFam" id="3.30.300.30:FF:000033">
    <property type="entry name" value="Nonribosomal siderophore peptide synthase SidC"/>
    <property type="match status" value="1"/>
</dbReference>
<dbReference type="Gene3D" id="3.30.300.30">
    <property type="match status" value="1"/>
</dbReference>
<dbReference type="Gene3D" id="1.10.1200.10">
    <property type="entry name" value="ACP-like"/>
    <property type="match status" value="3"/>
</dbReference>
<dbReference type="Gene3D" id="3.30.559.10">
    <property type="entry name" value="Chloramphenicol acetyltransferase-like domain"/>
    <property type="match status" value="3"/>
</dbReference>
<dbReference type="Gene3D" id="3.40.50.12780">
    <property type="entry name" value="N-terminal domain of ligase-like"/>
    <property type="match status" value="1"/>
</dbReference>
<dbReference type="Gene3D" id="3.30.559.30">
    <property type="entry name" value="Nonribosomal peptide synthetase, condensation domain"/>
    <property type="match status" value="3"/>
</dbReference>
<dbReference type="InterPro" id="IPR010071">
    <property type="entry name" value="AA_adenyl_dom"/>
</dbReference>
<dbReference type="InterPro" id="IPR036736">
    <property type="entry name" value="ACP-like_sf"/>
</dbReference>
<dbReference type="InterPro" id="IPR045851">
    <property type="entry name" value="AMP-bd_C_sf"/>
</dbReference>
<dbReference type="InterPro" id="IPR020845">
    <property type="entry name" value="AMP-binding_CS"/>
</dbReference>
<dbReference type="InterPro" id="IPR000873">
    <property type="entry name" value="AMP-dep_synth/lig_dom"/>
</dbReference>
<dbReference type="InterPro" id="IPR042099">
    <property type="entry name" value="ANL_N_sf"/>
</dbReference>
<dbReference type="InterPro" id="IPR023213">
    <property type="entry name" value="CAT-like_dom_sf"/>
</dbReference>
<dbReference type="InterPro" id="IPR001242">
    <property type="entry name" value="Condensatn"/>
</dbReference>
<dbReference type="InterPro" id="IPR020806">
    <property type="entry name" value="PKS_PP-bd"/>
</dbReference>
<dbReference type="InterPro" id="IPR009081">
    <property type="entry name" value="PP-bd_ACP"/>
</dbReference>
<dbReference type="InterPro" id="IPR006162">
    <property type="entry name" value="Ppantetheine_attach_site"/>
</dbReference>
<dbReference type="NCBIfam" id="TIGR01733">
    <property type="entry name" value="AA-adenyl-dom"/>
    <property type="match status" value="1"/>
</dbReference>
<dbReference type="PANTHER" id="PTHR45527:SF1">
    <property type="entry name" value="FATTY ACID SYNTHASE"/>
    <property type="match status" value="1"/>
</dbReference>
<dbReference type="PANTHER" id="PTHR45527">
    <property type="entry name" value="NONRIBOSOMAL PEPTIDE SYNTHETASE"/>
    <property type="match status" value="1"/>
</dbReference>
<dbReference type="Pfam" id="PF00501">
    <property type="entry name" value="AMP-binding"/>
    <property type="match status" value="1"/>
</dbReference>
<dbReference type="Pfam" id="PF00668">
    <property type="entry name" value="Condensation"/>
    <property type="match status" value="3"/>
</dbReference>
<dbReference type="Pfam" id="PF00550">
    <property type="entry name" value="PP-binding"/>
    <property type="match status" value="3"/>
</dbReference>
<dbReference type="SMART" id="SM00823">
    <property type="entry name" value="PKS_PP"/>
    <property type="match status" value="2"/>
</dbReference>
<dbReference type="SUPFAM" id="SSF56801">
    <property type="entry name" value="Acetyl-CoA synthetase-like"/>
    <property type="match status" value="1"/>
</dbReference>
<dbReference type="SUPFAM" id="SSF47336">
    <property type="entry name" value="ACP-like"/>
    <property type="match status" value="3"/>
</dbReference>
<dbReference type="SUPFAM" id="SSF52777">
    <property type="entry name" value="CoA-dependent acyltransferases"/>
    <property type="match status" value="6"/>
</dbReference>
<dbReference type="PROSITE" id="PS00455">
    <property type="entry name" value="AMP_BINDING"/>
    <property type="match status" value="1"/>
</dbReference>
<dbReference type="PROSITE" id="PS50075">
    <property type="entry name" value="CARRIER"/>
    <property type="match status" value="3"/>
</dbReference>
<dbReference type="PROSITE" id="PS00012">
    <property type="entry name" value="PHOSPHOPANTETHEINE"/>
    <property type="match status" value="2"/>
</dbReference>
<sequence>MSAHTRTDCDHPELPKLATVISGYRHCDLPDLSSDRFPASTTYSVSACIKESLISTQVDVLDARAPFAVLVATIGRVLGAYCGCTDVILALTDQDCEDLRTARITWDENTQWADLLHTVLQSLSGDTSFRITVPAIREALGLTEKQAPCLALVRDAPSSDYDNTDFPLVFNWDISTFTLRLFTSERHLHPSGADLLASQIASLLVPALTNPATQVFRLPDLQADLLSIYEKLTFEDRCQAYSRVPPVRLATDHLTLRLASQANDVAVEWYGALADDHHPGTSQPETMTFGEWHRRANQMARWLVARGLEKGDKVAVCMKRDTSYHVSLIAVLKAGACYVPIDPELPSERQSYIACDSGARFVLVSSETASTSIFGDIALEISSNEARRGIEAESDEELDLATPDDVSYLLYTSGTTGTPKGCVLTHRGLSEAVWALSAVCAEVDMEEGHMGNYLSIASVAFDVHLAEIFIPLARGMSIVSAPRSTLLEDLPYFIKELKISHLGIVPSLIEATMGSIQEDVESGGSTTLRYIASGGEKMSDAILDKWANHPTVRLANFYGPSEVTIGCAARFMDKTTPRANIGHPFASVSAFVVDENMNILLRGAPGELVVEGPLVGVGYHGRPDLTEKVFLEFPERGAGRWAYRTGDLVRMMPDGTLEVIGRIDTQIKLRGVRIESEGISSIVRSAGLPEHTLDVVTILGKHPAIGVEQLVSFIVWDQSTSVAVRKSTKPTVIAPSGNLLTKLSAACERELASYMRPSHFIPLNFMPLSSNGKNDAKLLTRVFQELDMDVLGSLMSRGSSTSVGSPNSGRTQLTKAEGQLLEIAKKHVHVPSGAANPNTNLFRYGLDSMSAVRLAAELRRTFSKVITASDILKSPSLEQIAKALDASSSSDQEQSPVESFVQRFSAERMQDVTEAYDSHVISAIYPPFPLQEGILYRSVNADTLYVQHVLLELAPGVSVDKLRQAWIDVVISSPILRTVFHFGRDLVQVVLHSDDVSRDIGEDVVHCDDAEAFKALFAERQSSVASKINQNVADTSPHRFTIYRSKDNGLVFVGLSIHHALFDGISLSHILRNLEKVYLDEPGYPSAAPEAVLDTIASVNVQTAQDFWVQHFAGFDWNRMPSRTASAKRADEKSLTFQIGLSELQRKASERRITLQSLLMTAFAHFLAKYMYGHNDVAFGIIRSGRSLPIADIETTVLPLLSVLPARVVLSASDVLRNVQTFNAEVTAYEHIPLGKIQQWVRPGANLFETLFSLSYKDDGRSSVWRLLESHNPEPDYILAVEVVLDTTEDRLTVQVAYTSQDLSSDIVDHLLDNFEGLALDLAQGSALNVETDSAAESGTALTSSEQTTQVTDIDAGEIDAVDEDLLLRLRKIVANFLQISVDLVTEGVSLVALGLDSIRSVGLSRVLRKEGIELASAEIMKLATPRRMAASAGKKISIPSTTKHKIDAYASSFARERDRIRAALDAASVSLSPDDEVDVFPVTTLQAGMLSQTVSSAGRRYVHLFPLRLTNGVDVAKLRDAWAKTVDALGILRTTFHFVPDLGIWTSAVHSKSPLKWSEIYLLEDASLLPLLDAVTITDAGCNSPPYQLYLVRSQEVDSQEDCRLIMVLHHALYDGVSISKLLDIVGASYNGEVTQNIVQFTSLLPEILWQEHLGTSFWVERLKNFHHGLVVPRLPDGSHSKKSHVASSVLNVSRSEVEKVCRLTAVTTQCVGQYAFAKLLASLTRSTDILFGHVVSGRNVSGAEDVIGPVLNTVPCRVRFASSVSNKLLLQAIHDTNVTALSWQHASLRSIQSHLKVERLWDCLFVFQPSQATETSEHKSVWEFDEVEDEDIDIQYGFNLELHETAAGFLLKAACSDRLMDAEDLGAALERFGLFLRVLVDDLDASCLNGLPDLTAPTTPHSVSESDFETDQIVSSWDEKSSTLRELLSTATGIPSSKIQMSMRLLGLGIDSISAIQIASKARRTGLHLTARDIIQSRTVGDLVMRAGAEDESEDRAGQALQTAFQIPRQEWSALTPKVKESDVDSVTVATPGMQWFMGGWQRSGGSRYQHVFGFELSADVDILKLQKAWDELLTRHAILRAAFSSSAQGEPRVVIYKRESMGARWQEEECDDIQDYDEGVASRMRALISSPPSSMQEPLTRATLLRSPSRNALIIHLHHFQYDAWSLQLLLDDLVRLYQGQPPTSSNDHSAILRVAVPDEHTRTEQRSYWQRMLTPNDPTLILFPKIPGHQARSNSSHNFLMKKSVLTPIADLEARARALSVSLYVVYLTCWAQVQAAATSSNSAIFGLWHSGRTGSIDQVECLAAPCLNILPFVVRGFNSTSTMDIATQIQDDLRERTPLVEQSPLTLVDEVMGGTGRPLCNVFVNIVRAAPELHSTQQTIFTPIDVPYFIPEAPSRGKTAMPELKVTGLIQDDIIVDIVDVSERGEVAMSIEFSEDTLDVETAEAMILQWVQLVKECLA</sequence>
<reference key="1">
    <citation type="journal article" date="2017" name="Appl. Environ. Microbiol.">
        <title>A highly conserved basidiomycete peptide synthetase produces a trimeric hydroxamate siderophore.</title>
        <authorList>
            <person name="Brandenburger E."/>
            <person name="Gressler M."/>
            <person name="Leonhardt R."/>
            <person name="Lackner G."/>
            <person name="Habel A."/>
            <person name="Hertweck C."/>
            <person name="Brock M."/>
            <person name="Hoffmeister D."/>
        </authorList>
    </citation>
    <scope>NUCLEOTIDE SEQUENCE [GENOMIC DNA]</scope>
    <scope>INDUCTION</scope>
    <scope>FUNCTION</scope>
    <scope>CATALYTIC ACTIVITY</scope>
    <source>
        <strain>B</strain>
    </source>
</reference>
<reference key="2">
    <citation type="journal article" date="2012" name="Proc. Natl. Acad. Sci. U.S.A.">
        <title>Comparative genomics of Ceriporiopsis subvermispora and Phanerochaete chrysosporium provide insight into selective ligninolysis.</title>
        <authorList>
            <person name="Fernandez-Fueyo E."/>
            <person name="Ruiz-Duenas F.J."/>
            <person name="Ferreira P."/>
            <person name="Floudas D."/>
            <person name="Hibbett D.S."/>
            <person name="Canessa P."/>
            <person name="Larrondo L.F."/>
            <person name="James T.Y."/>
            <person name="Seelenfreund D."/>
            <person name="Lobos S."/>
            <person name="Polanco R."/>
            <person name="Tello M."/>
            <person name="Honda Y."/>
            <person name="Watanabe T."/>
            <person name="Watanabe T."/>
            <person name="Ryu J.S."/>
            <person name="Kubicek C.P."/>
            <person name="Schmoll M."/>
            <person name="Gaskell J."/>
            <person name="Hammel K.E."/>
            <person name="St John F.J."/>
            <person name="Vanden Wymelenberg A."/>
            <person name="Sabat G."/>
            <person name="Splinter BonDurant S."/>
            <person name="Syed K."/>
            <person name="Yadav J.S."/>
            <person name="Doddapaneni H."/>
            <person name="Subramanian V."/>
            <person name="Lavin J.L."/>
            <person name="Oguiza J.A."/>
            <person name="Perez G."/>
            <person name="Pisabarro A.G."/>
            <person name="Ramirez L."/>
            <person name="Santoyo F."/>
            <person name="Master E."/>
            <person name="Coutinho P.M."/>
            <person name="Henrissat B."/>
            <person name="Lombard V."/>
            <person name="Magnuson J.K."/>
            <person name="Kuees U."/>
            <person name="Hori C."/>
            <person name="Igarashi K."/>
            <person name="Samejima M."/>
            <person name="Held B.W."/>
            <person name="Barry K.W."/>
            <person name="LaButti K.M."/>
            <person name="Lapidus A."/>
            <person name="Lindquist E.A."/>
            <person name="Lucas S.M."/>
            <person name="Riley R."/>
            <person name="Salamov A.A."/>
            <person name="Hoffmeister D."/>
            <person name="Schwenk D."/>
            <person name="Hadar Y."/>
            <person name="Yarden O."/>
            <person name="de Vries R.P."/>
            <person name="Wiebenga A."/>
            <person name="Stenlid J."/>
            <person name="Eastwood D."/>
            <person name="Grigoriev I.V."/>
            <person name="Berka R.M."/>
            <person name="Blanchette R.A."/>
            <person name="Kersten P."/>
            <person name="Martinez A.T."/>
            <person name="Vicuna R."/>
            <person name="Cullen D."/>
        </authorList>
    </citation>
    <scope>NUCLEOTIDE SEQUENCE [LARGE SCALE GENOMIC DNA]</scope>
    <source>
        <strain>B</strain>
    </source>
</reference>
<keyword id="KW-0436">Ligase</keyword>
<keyword id="KW-0511">Multifunctional enzyme</keyword>
<keyword id="KW-0596">Phosphopantetheine</keyword>
<keyword id="KW-0597">Phosphoprotein</keyword>
<keyword id="KW-1185">Reference proteome</keyword>
<keyword id="KW-0677">Repeat</keyword>
<protein>
    <recommendedName>
        <fullName evidence="5">Nonribosomal peptide synthetase NPS2</fullName>
        <shortName evidence="5">NPS2</shortName>
        <shortName evidence="6">NRPS 2</shortName>
        <ecNumber evidence="4">6.3.2.-</ecNumber>
    </recommendedName>
    <alternativeName>
        <fullName evidence="5">Type VI siderophore synthetase NPS2</fullName>
    </alternativeName>
</protein>
<name>NPS2_CERS8</name>
<gene>
    <name evidence="5" type="primary">NPS2</name>
    <name type="ORF">CERSUDRAFT_172109</name>
</gene>